<evidence type="ECO:0000255" key="1"/>
<evidence type="ECO:0000255" key="2">
    <source>
        <dbReference type="PROSITE-ProRule" id="PRU00498"/>
    </source>
</evidence>
<evidence type="ECO:0000269" key="3">
    <source>
    </source>
</evidence>
<evidence type="ECO:0000269" key="4">
    <source>
    </source>
</evidence>
<evidence type="ECO:0000269" key="5">
    <source>
    </source>
</evidence>
<evidence type="ECO:0000269" key="6">
    <source>
    </source>
</evidence>
<evidence type="ECO:0000269" key="7">
    <source>
    </source>
</evidence>
<evidence type="ECO:0000303" key="8">
    <source>
    </source>
</evidence>
<evidence type="ECO:0000305" key="9"/>
<evidence type="ECO:0000305" key="10">
    <source>
    </source>
</evidence>
<reference key="1">
    <citation type="journal article" date="2009" name="Nature">
        <title>Genome sequence and analysis of the Irish potato famine pathogen Phytophthora infestans.</title>
        <authorList>
            <consortium name="The Broad Institute Genome Sequencing Platform"/>
            <person name="Haas B.J."/>
            <person name="Kamoun S."/>
            <person name="Zody M.C."/>
            <person name="Jiang R.H."/>
            <person name="Handsaker R.E."/>
            <person name="Cano L.M."/>
            <person name="Grabherr M."/>
            <person name="Kodira C.D."/>
            <person name="Raffaele S."/>
            <person name="Torto-Alalibo T."/>
            <person name="Bozkurt T.O."/>
            <person name="Ah-Fong A.M."/>
            <person name="Alvarado L."/>
            <person name="Anderson V.L."/>
            <person name="Armstrong M.R."/>
            <person name="Avrova A."/>
            <person name="Baxter L."/>
            <person name="Beynon J."/>
            <person name="Boevink P.C."/>
            <person name="Bollmann S.R."/>
            <person name="Bos J.I."/>
            <person name="Bulone V."/>
            <person name="Cai G."/>
            <person name="Cakir C."/>
            <person name="Carrington J.C."/>
            <person name="Chawner M."/>
            <person name="Conti L."/>
            <person name="Costanzo S."/>
            <person name="Ewan R."/>
            <person name="Fahlgren N."/>
            <person name="Fischbach M.A."/>
            <person name="Fugelstad J."/>
            <person name="Gilroy E.M."/>
            <person name="Gnerre S."/>
            <person name="Green P.J."/>
            <person name="Grenville-Briggs L.J."/>
            <person name="Griffith J."/>
            <person name="Grunwald N.J."/>
            <person name="Horn K."/>
            <person name="Horner N.R."/>
            <person name="Hu C.H."/>
            <person name="Huitema E."/>
            <person name="Jeong D.H."/>
            <person name="Jones A.M."/>
            <person name="Jones J.D."/>
            <person name="Jones R.W."/>
            <person name="Karlsson E.K."/>
            <person name="Kunjeti S.G."/>
            <person name="Lamour K."/>
            <person name="Liu Z."/>
            <person name="Ma L."/>
            <person name="Maclean D."/>
            <person name="Chibucos M.C."/>
            <person name="McDonald H."/>
            <person name="McWalters J."/>
            <person name="Meijer H.J."/>
            <person name="Morgan W."/>
            <person name="Morris P.F."/>
            <person name="Munro C.A."/>
            <person name="O'Neill K."/>
            <person name="Ospina-Giraldo M."/>
            <person name="Pinzon A."/>
            <person name="Pritchard L."/>
            <person name="Ramsahoye B."/>
            <person name="Ren Q."/>
            <person name="Restrepo S."/>
            <person name="Roy S."/>
            <person name="Sadanandom A."/>
            <person name="Savidor A."/>
            <person name="Schornack S."/>
            <person name="Schwartz D.C."/>
            <person name="Schumann U.D."/>
            <person name="Schwessinger B."/>
            <person name="Seyer L."/>
            <person name="Sharpe T."/>
            <person name="Silvar C."/>
            <person name="Song J."/>
            <person name="Studholme D.J."/>
            <person name="Sykes S."/>
            <person name="Thines M."/>
            <person name="van de Vondervoort P.J."/>
            <person name="Phuntumart V."/>
            <person name="Wawra S."/>
            <person name="Weide R."/>
            <person name="Win J."/>
            <person name="Young C."/>
            <person name="Zhou S."/>
            <person name="Fry W."/>
            <person name="Meyers B.C."/>
            <person name="van West P."/>
            <person name="Ristaino J."/>
            <person name="Govers F."/>
            <person name="Birch P.R."/>
            <person name="Whisson S.C."/>
            <person name="Judelson H.S."/>
            <person name="Nusbaum C."/>
        </authorList>
    </citation>
    <scope>NUCLEOTIDE SEQUENCE [LARGE SCALE GENOMIC DNA]</scope>
    <source>
        <strain>T30-4</strain>
    </source>
</reference>
<reference key="2">
    <citation type="journal article" date="2007" name="Nature">
        <title>A translocation signal for delivery of oomycete effector proteins into host plant cells.</title>
        <authorList>
            <person name="Whisson S.C."/>
            <person name="Boevink P.C."/>
            <person name="Moleleki L."/>
            <person name="Avrova A.O."/>
            <person name="Morales J.G."/>
            <person name="Gilroy E.M."/>
            <person name="Armstrong M.R."/>
            <person name="Grouffaud S."/>
            <person name="van West P."/>
            <person name="Chapman S."/>
            <person name="Hein I."/>
            <person name="Toth I.K."/>
            <person name="Pritchard L."/>
            <person name="Birch P.R."/>
        </authorList>
    </citation>
    <scope>INDUCTION</scope>
    <scope>DOMAIN</scope>
</reference>
<reference key="3">
    <citation type="journal article" date="2009" name="Plant Cell">
        <title>In planta expression screens of Phytophthora infestans RXLR effectors reveal diverse phenotypes, including activation of the Solanum bulbocastanum disease resistance protein Rpi-blb2.</title>
        <authorList>
            <person name="Oh S.K."/>
            <person name="Young C."/>
            <person name="Lee M."/>
            <person name="Oliva R."/>
            <person name="Bozkurt T.O."/>
            <person name="Cano L.M."/>
            <person name="Win J."/>
            <person name="Bos J.I."/>
            <person name="Liu H.Y."/>
            <person name="van Damme M."/>
            <person name="Morgan W."/>
            <person name="Choi D."/>
            <person name="Van der Vossen E.A."/>
            <person name="Vleeshouwers V.G."/>
            <person name="Kamoun S."/>
        </authorList>
    </citation>
    <scope>INDUCTION</scope>
</reference>
<reference key="4">
    <citation type="journal article" date="2013" name="PLoS Pathog.">
        <title>An RxLR effector from Phytophthora infestans prevents re-localisation of two plant NAC transcription factors from the endoplasmic reticulum to the nucleus.</title>
        <authorList>
            <person name="McLellan H."/>
            <person name="Boevink P.C."/>
            <person name="Armstrong M.R."/>
            <person name="Pritchard L."/>
            <person name="Gomez S."/>
            <person name="Morales J."/>
            <person name="Whisson S.C."/>
            <person name="Beynon J.L."/>
            <person name="Birch P.R."/>
        </authorList>
    </citation>
    <scope>FUNCTION</scope>
    <scope>INTERACTION WITH HOST NTP1 AND NTP2</scope>
    <scope>SUBCELLULAR LOCATION</scope>
    <scope>DISRUPTION PHENOTYPE</scope>
</reference>
<reference key="5">
    <citation type="journal article" date="2017" name="BMC Genomics">
        <title>RNA-seq of life stages of the oomycete Phytophthora infestans reveals dynamic changes in metabolic, signal transduction, and pathogenesis genes and a major role for calcium signaling in development.</title>
        <authorList>
            <person name="Ah-Fong A.M."/>
            <person name="Kim K.S."/>
            <person name="Judelson H.S."/>
        </authorList>
    </citation>
    <scope>INDUCTION</scope>
</reference>
<reference key="6">
    <citation type="journal article" date="2017" name="Front. Plant Sci.">
        <title>Conserved RXLR effector genes of Phytophthora infestans expressed at the early stage of potato infection are suppressive to host defense.</title>
        <authorList>
            <person name="Yin J."/>
            <person name="Gu B."/>
            <person name="Huang G."/>
            <person name="Tian Y."/>
            <person name="Quan J."/>
            <person name="Lindqvist-Kreuze H."/>
            <person name="Shan W."/>
        </authorList>
    </citation>
    <scope>INDUCTION</scope>
</reference>
<proteinExistence type="evidence at protein level"/>
<keyword id="KW-0325">Glycoprotein</keyword>
<keyword id="KW-1038">Host endoplasmic reticulum</keyword>
<keyword id="KW-1043">Host membrane</keyword>
<keyword id="KW-0472">Membrane</keyword>
<keyword id="KW-1185">Reference proteome</keyword>
<keyword id="KW-0964">Secreted</keyword>
<keyword id="KW-0732">Signal</keyword>
<keyword id="KW-0812">Transmembrane</keyword>
<keyword id="KW-1133">Transmembrane helix</keyword>
<keyword id="KW-0843">Virulence</keyword>
<accession>D0MZL5</accession>
<comment type="function">
    <text evidence="5">Effector that is required for full virulence (PubMed:24130484). Targets host NTP1 and NTP2 transcription factors and prevents their pathogen-associated molecular pattern (PAMP)-triggered re-localization from the endoplasmic reticulum into the nucleus, where they contribute to prevent disease progression by P.infestans (PubMed:24130484).</text>
</comment>
<comment type="subunit">
    <text evidence="5">Interacts with the C-terminal portions the ER-associated potato NAC transcription factors NTP1 and NTP2.</text>
</comment>
<comment type="subcellular location">
    <subcellularLocation>
        <location evidence="5">Secreted</location>
    </subcellularLocation>
    <subcellularLocation>
        <location evidence="5">Host endoplasmic reticulum membrane</location>
        <topology evidence="1">Single-pass membrane protein</topology>
    </subcellularLocation>
</comment>
<comment type="induction">
    <text evidence="3 4 6 7">Expression is induced during host plant infection.</text>
</comment>
<comment type="domain">
    <text evidence="10">The RxLR-dEER motif acts to carry the protein into the host cell cytoplasm through binding to cell surface phosphatidylinositol-3-phosphate.</text>
</comment>
<comment type="disruption phenotype">
    <text evidence="5">Decreases virulence on both potato and Nicitiana benthamiana.</text>
</comment>
<comment type="similarity">
    <text evidence="9">Belongs to the RxLR effector family.</text>
</comment>
<protein>
    <recommendedName>
        <fullName evidence="8">RxLR effector protein PITG_03192</fullName>
    </recommendedName>
</protein>
<name>RD28_PHYIT</name>
<feature type="signal peptide" evidence="1">
    <location>
        <begin position="1"/>
        <end position="24"/>
    </location>
</feature>
<feature type="chain" id="PRO_5003011829" description="RxLR effector protein PITG_03192">
    <location>
        <begin position="25"/>
        <end position="144"/>
    </location>
</feature>
<feature type="transmembrane region" description="Helical" evidence="1">
    <location>
        <begin position="122"/>
        <end position="142"/>
    </location>
</feature>
<feature type="short sequence motif" description="RxLR-dEER" evidence="10">
    <location>
        <begin position="49"/>
        <end position="58"/>
    </location>
</feature>
<feature type="glycosylation site" description="N-linked (GlcNAc...) asparagine" evidence="2">
    <location>
        <position position="115"/>
    </location>
</feature>
<gene>
    <name evidence="8" type="primary">PexRD28</name>
    <name type="ORF">PITG_03192</name>
</gene>
<sequence length="144" mass="16211">MRVGFVFALLVVSVIVCFNGLTSAESTVVMNNRNPDSINVPISDDITSRNLRASGEERAYAFVDKIKSLFSRPGISQKVESLQKNPAMVKNLEKAALSQKGSSKVRDWFMHMYNNSSKRDKFFILATLVMFPIGVWAVVTNYRR</sequence>
<dbReference type="EMBL" id="DS028121">
    <property type="protein sequence ID" value="EEY65678.1"/>
    <property type="molecule type" value="Genomic_DNA"/>
</dbReference>
<dbReference type="RefSeq" id="XP_002906277.1">
    <property type="nucleotide sequence ID" value="XM_002906231.1"/>
</dbReference>
<dbReference type="SMR" id="D0MZL5"/>
<dbReference type="STRING" id="403677.D0MZL5"/>
<dbReference type="GlyCosmos" id="D0MZL5">
    <property type="glycosylation" value="1 site, No reported glycans"/>
</dbReference>
<dbReference type="EnsemblProtists" id="PITG_03192T0">
    <property type="protein sequence ID" value="PITG_03192T0"/>
    <property type="gene ID" value="PITG_03192"/>
</dbReference>
<dbReference type="GeneID" id="9464601"/>
<dbReference type="KEGG" id="pif:PITG_03192"/>
<dbReference type="VEuPathDB" id="FungiDB:PITG_03192"/>
<dbReference type="eggNOG" id="ENOG502T20P">
    <property type="taxonomic scope" value="Eukaryota"/>
</dbReference>
<dbReference type="HOGENOM" id="CLU_1781144_0_0_1"/>
<dbReference type="InParanoid" id="D0MZL5"/>
<dbReference type="OMA" id="ISXDITR"/>
<dbReference type="OrthoDB" id="126586at2759"/>
<dbReference type="PHI-base" id="PHI:6301"/>
<dbReference type="Proteomes" id="UP000006643">
    <property type="component" value="Partially assembled WGS sequence"/>
</dbReference>
<dbReference type="GO" id="GO:0005576">
    <property type="term" value="C:extracellular region"/>
    <property type="evidence" value="ECO:0007669"/>
    <property type="project" value="UniProtKB-SubCell"/>
</dbReference>
<dbReference type="GO" id="GO:0044167">
    <property type="term" value="C:host cell endoplasmic reticulum membrane"/>
    <property type="evidence" value="ECO:0007669"/>
    <property type="project" value="UniProtKB-SubCell"/>
</dbReference>
<dbReference type="GO" id="GO:0016020">
    <property type="term" value="C:membrane"/>
    <property type="evidence" value="ECO:0007669"/>
    <property type="project" value="UniProtKB-KW"/>
</dbReference>
<dbReference type="GO" id="GO:0052026">
    <property type="term" value="P:symbiont-mediated perturbation of host transcription"/>
    <property type="evidence" value="ECO:0000269"/>
    <property type="project" value="SigSci"/>
</dbReference>
<organism>
    <name type="scientific">Phytophthora infestans (strain T30-4)</name>
    <name type="common">Potato late blight agent</name>
    <dbReference type="NCBI Taxonomy" id="403677"/>
    <lineage>
        <taxon>Eukaryota</taxon>
        <taxon>Sar</taxon>
        <taxon>Stramenopiles</taxon>
        <taxon>Oomycota</taxon>
        <taxon>Peronosporales</taxon>
        <taxon>Peronosporaceae</taxon>
        <taxon>Phytophthora</taxon>
    </lineage>
</organism>